<dbReference type="EC" id="2.1.3.-" evidence="1"/>
<dbReference type="EMBL" id="CP000025">
    <property type="protein sequence ID" value="AAW35797.1"/>
    <property type="molecule type" value="Genomic_DNA"/>
</dbReference>
<dbReference type="SMR" id="Q5HVI0"/>
<dbReference type="KEGG" id="cjr:CJE0693"/>
<dbReference type="HOGENOM" id="CLU_078475_0_0_7"/>
<dbReference type="GO" id="GO:0016743">
    <property type="term" value="F:carboxyl- or carbamoyltransferase activity"/>
    <property type="evidence" value="ECO:0007669"/>
    <property type="project" value="UniProtKB-UniRule"/>
</dbReference>
<dbReference type="GO" id="GO:1904047">
    <property type="term" value="F:S-adenosyl-L-methionine binding"/>
    <property type="evidence" value="ECO:0007669"/>
    <property type="project" value="UniProtKB-UniRule"/>
</dbReference>
<dbReference type="GO" id="GO:0002098">
    <property type="term" value="P:tRNA wobble uridine modification"/>
    <property type="evidence" value="ECO:0007669"/>
    <property type="project" value="InterPro"/>
</dbReference>
<dbReference type="CDD" id="cd02440">
    <property type="entry name" value="AdoMet_MTases"/>
    <property type="match status" value="1"/>
</dbReference>
<dbReference type="Gene3D" id="3.40.50.150">
    <property type="entry name" value="Vaccinia Virus protein VP39"/>
    <property type="match status" value="1"/>
</dbReference>
<dbReference type="HAMAP" id="MF_01589">
    <property type="entry name" value="Cx_SAM_synthase"/>
    <property type="match status" value="1"/>
</dbReference>
<dbReference type="InterPro" id="IPR005271">
    <property type="entry name" value="CmoA"/>
</dbReference>
<dbReference type="InterPro" id="IPR041698">
    <property type="entry name" value="Methyltransf_25"/>
</dbReference>
<dbReference type="InterPro" id="IPR029063">
    <property type="entry name" value="SAM-dependent_MTases_sf"/>
</dbReference>
<dbReference type="NCBIfam" id="TIGR00740">
    <property type="entry name" value="carboxy-S-adenosyl-L-methionine synthase CmoA"/>
    <property type="match status" value="1"/>
</dbReference>
<dbReference type="PANTHER" id="PTHR43861:SF2">
    <property type="entry name" value="CARBOXY-S-ADENOSYL-L-METHIONINE SYNTHASE"/>
    <property type="match status" value="1"/>
</dbReference>
<dbReference type="PANTHER" id="PTHR43861">
    <property type="entry name" value="TRANS-ACONITATE 2-METHYLTRANSFERASE-RELATED"/>
    <property type="match status" value="1"/>
</dbReference>
<dbReference type="Pfam" id="PF13649">
    <property type="entry name" value="Methyltransf_25"/>
    <property type="match status" value="1"/>
</dbReference>
<dbReference type="PIRSF" id="PIRSF006325">
    <property type="entry name" value="MeTrfase_bac"/>
    <property type="match status" value="1"/>
</dbReference>
<dbReference type="SUPFAM" id="SSF53335">
    <property type="entry name" value="S-adenosyl-L-methionine-dependent methyltransferases"/>
    <property type="match status" value="1"/>
</dbReference>
<organism>
    <name type="scientific">Campylobacter jejuni (strain RM1221)</name>
    <dbReference type="NCBI Taxonomy" id="195099"/>
    <lineage>
        <taxon>Bacteria</taxon>
        <taxon>Pseudomonadati</taxon>
        <taxon>Campylobacterota</taxon>
        <taxon>Epsilonproteobacteria</taxon>
        <taxon>Campylobacterales</taxon>
        <taxon>Campylobacteraceae</taxon>
        <taxon>Campylobacter</taxon>
    </lineage>
</organism>
<proteinExistence type="inferred from homology"/>
<keyword id="KW-0949">S-adenosyl-L-methionine</keyword>
<keyword id="KW-0808">Transferase</keyword>
<comment type="function">
    <text evidence="1">Catalyzes the conversion of S-adenosyl-L-methionine (SAM) to carboxy-S-adenosyl-L-methionine (Cx-SAM).</text>
</comment>
<comment type="catalytic activity">
    <reaction evidence="1">
        <text>prephenate + S-adenosyl-L-methionine = carboxy-S-adenosyl-L-methionine + 3-phenylpyruvate + H2O</text>
        <dbReference type="Rhea" id="RHEA:51692"/>
        <dbReference type="ChEBI" id="CHEBI:15377"/>
        <dbReference type="ChEBI" id="CHEBI:18005"/>
        <dbReference type="ChEBI" id="CHEBI:29934"/>
        <dbReference type="ChEBI" id="CHEBI:59789"/>
        <dbReference type="ChEBI" id="CHEBI:134278"/>
    </reaction>
</comment>
<comment type="subunit">
    <text evidence="1">Homodimer.</text>
</comment>
<comment type="similarity">
    <text evidence="1">Belongs to the class I-like SAM-binding methyltransferase superfamily. Cx-SAM synthase family.</text>
</comment>
<protein>
    <recommendedName>
        <fullName evidence="1">Carboxy-S-adenosyl-L-methionine synthase</fullName>
        <shortName evidence="1">Cx-SAM synthase</shortName>
        <ecNumber evidence="1">2.1.3.-</ecNumber>
    </recommendedName>
</protein>
<accession>Q5HVI0</accession>
<gene>
    <name evidence="1" type="primary">cmoA</name>
    <name type="ordered locus">CJE0693</name>
</gene>
<reference key="1">
    <citation type="journal article" date="2005" name="PLoS Biol.">
        <title>Major structural differences and novel potential virulence mechanisms from the genomes of multiple Campylobacter species.</title>
        <authorList>
            <person name="Fouts D.E."/>
            <person name="Mongodin E.F."/>
            <person name="Mandrell R.E."/>
            <person name="Miller W.G."/>
            <person name="Rasko D.A."/>
            <person name="Ravel J."/>
            <person name="Brinkac L.M."/>
            <person name="DeBoy R.T."/>
            <person name="Parker C.T."/>
            <person name="Daugherty S.C."/>
            <person name="Dodson R.J."/>
            <person name="Durkin A.S."/>
            <person name="Madupu R."/>
            <person name="Sullivan S.A."/>
            <person name="Shetty J.U."/>
            <person name="Ayodeji M.A."/>
            <person name="Shvartsbeyn A."/>
            <person name="Schatz M.C."/>
            <person name="Badger J.H."/>
            <person name="Fraser C.M."/>
            <person name="Nelson K.E."/>
        </authorList>
    </citation>
    <scope>NUCLEOTIDE SEQUENCE [LARGE SCALE GENOMIC DNA]</scope>
    <source>
        <strain>RM1221</strain>
    </source>
</reference>
<evidence type="ECO:0000255" key="1">
    <source>
        <dbReference type="HAMAP-Rule" id="MF_01589"/>
    </source>
</evidence>
<sequence length="235" mass="27166">MKDELFKQSPKKQFEFDKSVASVFDDMINRSVPFYRENLELCGNLLAKILPTNASVCDLGCSSANFLIFLANLRKDFKLFGVDNSASMLEVAKSKAKAYGLDISFFEANLCEFDFFTCDVFVANYTMQFIRPPKRQELLDQIYKNLNSKGILIMSEKILYEDAFLSKNIIELYADYKEKQGYSKFEIAAKREALENVLIPYSQKENLNMLEKAGFKKIESIFKWANFETFIAFKD</sequence>
<feature type="chain" id="PRO_0000314315" description="Carboxy-S-adenosyl-L-methionine synthase">
    <location>
        <begin position="1"/>
        <end position="235"/>
    </location>
</feature>
<feature type="binding site" evidence="1">
    <location>
        <position position="35"/>
    </location>
    <ligand>
        <name>S-adenosyl-L-methionine</name>
        <dbReference type="ChEBI" id="CHEBI:59789"/>
    </ligand>
</feature>
<feature type="binding site" evidence="1">
    <location>
        <begin position="60"/>
        <end position="62"/>
    </location>
    <ligand>
        <name>S-adenosyl-L-methionine</name>
        <dbReference type="ChEBI" id="CHEBI:59789"/>
    </ligand>
</feature>
<feature type="binding site" evidence="1">
    <location>
        <begin position="83"/>
        <end position="84"/>
    </location>
    <ligand>
        <name>S-adenosyl-L-methionine</name>
        <dbReference type="ChEBI" id="CHEBI:59789"/>
    </ligand>
</feature>
<feature type="binding site" evidence="1">
    <location>
        <position position="124"/>
    </location>
    <ligand>
        <name>S-adenosyl-L-methionine</name>
        <dbReference type="ChEBI" id="CHEBI:59789"/>
    </ligand>
</feature>
<feature type="binding site" evidence="1">
    <location>
        <position position="191"/>
    </location>
    <ligand>
        <name>S-adenosyl-L-methionine</name>
        <dbReference type="ChEBI" id="CHEBI:59789"/>
    </ligand>
</feature>
<name>CMOA_CAMJR</name>